<name>MURG_ACIF2</name>
<organism>
    <name type="scientific">Acidithiobacillus ferrooxidans (strain ATCC 23270 / DSM 14882 / CIP 104768 / NCIMB 8455)</name>
    <name type="common">Ferrobacillus ferrooxidans (strain ATCC 23270)</name>
    <dbReference type="NCBI Taxonomy" id="243159"/>
    <lineage>
        <taxon>Bacteria</taxon>
        <taxon>Pseudomonadati</taxon>
        <taxon>Pseudomonadota</taxon>
        <taxon>Acidithiobacillia</taxon>
        <taxon>Acidithiobacillales</taxon>
        <taxon>Acidithiobacillaceae</taxon>
        <taxon>Acidithiobacillus</taxon>
    </lineage>
</organism>
<feature type="chain" id="PRO_1000116465" description="UDP-N-acetylglucosamine--N-acetylmuramyl-(pentapeptide) pyrophosphoryl-undecaprenol N-acetylglucosamine transferase">
    <location>
        <begin position="1"/>
        <end position="360"/>
    </location>
</feature>
<feature type="binding site" evidence="1">
    <location>
        <begin position="12"/>
        <end position="14"/>
    </location>
    <ligand>
        <name>UDP-N-acetyl-alpha-D-glucosamine</name>
        <dbReference type="ChEBI" id="CHEBI:57705"/>
    </ligand>
</feature>
<feature type="binding site" evidence="1">
    <location>
        <position position="124"/>
    </location>
    <ligand>
        <name>UDP-N-acetyl-alpha-D-glucosamine</name>
        <dbReference type="ChEBI" id="CHEBI:57705"/>
    </ligand>
</feature>
<feature type="binding site" evidence="1">
    <location>
        <position position="161"/>
    </location>
    <ligand>
        <name>UDP-N-acetyl-alpha-D-glucosamine</name>
        <dbReference type="ChEBI" id="CHEBI:57705"/>
    </ligand>
</feature>
<feature type="binding site" evidence="1">
    <location>
        <position position="189"/>
    </location>
    <ligand>
        <name>UDP-N-acetyl-alpha-D-glucosamine</name>
        <dbReference type="ChEBI" id="CHEBI:57705"/>
    </ligand>
</feature>
<feature type="binding site" evidence="1">
    <location>
        <position position="243"/>
    </location>
    <ligand>
        <name>UDP-N-acetyl-alpha-D-glucosamine</name>
        <dbReference type="ChEBI" id="CHEBI:57705"/>
    </ligand>
</feature>
<feature type="binding site" evidence="1">
    <location>
        <position position="288"/>
    </location>
    <ligand>
        <name>UDP-N-acetyl-alpha-D-glucosamine</name>
        <dbReference type="ChEBI" id="CHEBI:57705"/>
    </ligand>
</feature>
<accession>B7J3V2</accession>
<sequence>MADSVLIAAGGTGGHVFPALAVADALRAQGVEVTFAGTATGMEARLVPERGYTLHTLDMQGLRGKGIRRWLRAPWRVSRAILQARRILRQTRSHVVLGMGGYVTAPVGIAAWTLGRPLCLHEQNAVAGLSNRLLAPLARRVFLGFPGARLARGEWVGNPVREAIHALPTPQERFHDRKGPVRLLIMGGSQGAQVLNAVSAAALSGMTDAERPAIWHQTGRDHAESTRAAYAQARIDAKVEPFIDDMAAALGWADLALCRAGAATIAELAAAGLGAILIPFPFAVDDHQAANARFLEKAGAARMLRQEGLDALQLRDVLRPLLADPELRLRWAEAARRQAKGDAAATVAAACIECAGGIDA</sequence>
<keyword id="KW-0131">Cell cycle</keyword>
<keyword id="KW-0132">Cell division</keyword>
<keyword id="KW-0997">Cell inner membrane</keyword>
<keyword id="KW-1003">Cell membrane</keyword>
<keyword id="KW-0133">Cell shape</keyword>
<keyword id="KW-0961">Cell wall biogenesis/degradation</keyword>
<keyword id="KW-0328">Glycosyltransferase</keyword>
<keyword id="KW-0472">Membrane</keyword>
<keyword id="KW-0573">Peptidoglycan synthesis</keyword>
<keyword id="KW-1185">Reference proteome</keyword>
<keyword id="KW-0808">Transferase</keyword>
<comment type="function">
    <text evidence="1">Cell wall formation. Catalyzes the transfer of a GlcNAc subunit on undecaprenyl-pyrophosphoryl-MurNAc-pentapeptide (lipid intermediate I) to form undecaprenyl-pyrophosphoryl-MurNAc-(pentapeptide)GlcNAc (lipid intermediate II).</text>
</comment>
<comment type="catalytic activity">
    <reaction evidence="1">
        <text>di-trans,octa-cis-undecaprenyl diphospho-N-acetyl-alpha-D-muramoyl-L-alanyl-D-glutamyl-meso-2,6-diaminopimeloyl-D-alanyl-D-alanine + UDP-N-acetyl-alpha-D-glucosamine = di-trans,octa-cis-undecaprenyl diphospho-[N-acetyl-alpha-D-glucosaminyl-(1-&gt;4)]-N-acetyl-alpha-D-muramoyl-L-alanyl-D-glutamyl-meso-2,6-diaminopimeloyl-D-alanyl-D-alanine + UDP + H(+)</text>
        <dbReference type="Rhea" id="RHEA:31227"/>
        <dbReference type="ChEBI" id="CHEBI:15378"/>
        <dbReference type="ChEBI" id="CHEBI:57705"/>
        <dbReference type="ChEBI" id="CHEBI:58223"/>
        <dbReference type="ChEBI" id="CHEBI:61387"/>
        <dbReference type="ChEBI" id="CHEBI:61388"/>
        <dbReference type="EC" id="2.4.1.227"/>
    </reaction>
</comment>
<comment type="pathway">
    <text evidence="1">Cell wall biogenesis; peptidoglycan biosynthesis.</text>
</comment>
<comment type="subcellular location">
    <subcellularLocation>
        <location evidence="1">Cell inner membrane</location>
        <topology evidence="1">Peripheral membrane protein</topology>
        <orientation evidence="1">Cytoplasmic side</orientation>
    </subcellularLocation>
</comment>
<comment type="similarity">
    <text evidence="1">Belongs to the glycosyltransferase 28 family. MurG subfamily.</text>
</comment>
<proteinExistence type="inferred from homology"/>
<protein>
    <recommendedName>
        <fullName evidence="1">UDP-N-acetylglucosamine--N-acetylmuramyl-(pentapeptide) pyrophosphoryl-undecaprenol N-acetylglucosamine transferase</fullName>
        <ecNumber evidence="1">2.4.1.227</ecNumber>
    </recommendedName>
    <alternativeName>
        <fullName evidence="1">Undecaprenyl-PP-MurNAc-pentapeptide-UDPGlcNAc GlcNAc transferase</fullName>
    </alternativeName>
</protein>
<reference key="1">
    <citation type="journal article" date="2008" name="BMC Genomics">
        <title>Acidithiobacillus ferrooxidans metabolism: from genome sequence to industrial applications.</title>
        <authorList>
            <person name="Valdes J."/>
            <person name="Pedroso I."/>
            <person name="Quatrini R."/>
            <person name="Dodson R.J."/>
            <person name="Tettelin H."/>
            <person name="Blake R. II"/>
            <person name="Eisen J.A."/>
            <person name="Holmes D.S."/>
        </authorList>
    </citation>
    <scope>NUCLEOTIDE SEQUENCE [LARGE SCALE GENOMIC DNA]</scope>
    <source>
        <strain>ATCC 23270 / DSM 14882 / CIP 104768 / NCIMB 8455</strain>
    </source>
</reference>
<dbReference type="EC" id="2.4.1.227" evidence="1"/>
<dbReference type="EMBL" id="CP001219">
    <property type="protein sequence ID" value="ACK78643.1"/>
    <property type="molecule type" value="Genomic_DNA"/>
</dbReference>
<dbReference type="RefSeq" id="WP_012536019.1">
    <property type="nucleotide sequence ID" value="NC_011761.1"/>
</dbReference>
<dbReference type="SMR" id="B7J3V2"/>
<dbReference type="STRING" id="243159.AFE_0206"/>
<dbReference type="CAZy" id="GT28">
    <property type="family name" value="Glycosyltransferase Family 28"/>
</dbReference>
<dbReference type="PaxDb" id="243159-AFE_0206"/>
<dbReference type="GeneID" id="65279591"/>
<dbReference type="KEGG" id="afr:AFE_0206"/>
<dbReference type="eggNOG" id="COG0707">
    <property type="taxonomic scope" value="Bacteria"/>
</dbReference>
<dbReference type="HOGENOM" id="CLU_037404_2_0_6"/>
<dbReference type="UniPathway" id="UPA00219"/>
<dbReference type="Proteomes" id="UP000001362">
    <property type="component" value="Chromosome"/>
</dbReference>
<dbReference type="GO" id="GO:0005886">
    <property type="term" value="C:plasma membrane"/>
    <property type="evidence" value="ECO:0007669"/>
    <property type="project" value="UniProtKB-SubCell"/>
</dbReference>
<dbReference type="GO" id="GO:0051991">
    <property type="term" value="F:UDP-N-acetyl-D-glucosamine:N-acetylmuramoyl-L-alanyl-D-glutamyl-meso-2,6-diaminopimelyl-D-alanyl-D-alanine-diphosphoundecaprenol 4-beta-N-acetylglucosaminlytransferase activity"/>
    <property type="evidence" value="ECO:0007669"/>
    <property type="project" value="RHEA"/>
</dbReference>
<dbReference type="GO" id="GO:0050511">
    <property type="term" value="F:undecaprenyldiphospho-muramoylpentapeptide beta-N-acetylglucosaminyltransferase activity"/>
    <property type="evidence" value="ECO:0007669"/>
    <property type="project" value="UniProtKB-UniRule"/>
</dbReference>
<dbReference type="GO" id="GO:0005975">
    <property type="term" value="P:carbohydrate metabolic process"/>
    <property type="evidence" value="ECO:0007669"/>
    <property type="project" value="InterPro"/>
</dbReference>
<dbReference type="GO" id="GO:0051301">
    <property type="term" value="P:cell division"/>
    <property type="evidence" value="ECO:0007669"/>
    <property type="project" value="UniProtKB-KW"/>
</dbReference>
<dbReference type="GO" id="GO:0071555">
    <property type="term" value="P:cell wall organization"/>
    <property type="evidence" value="ECO:0007669"/>
    <property type="project" value="UniProtKB-KW"/>
</dbReference>
<dbReference type="GO" id="GO:0030259">
    <property type="term" value="P:lipid glycosylation"/>
    <property type="evidence" value="ECO:0007669"/>
    <property type="project" value="UniProtKB-UniRule"/>
</dbReference>
<dbReference type="GO" id="GO:0009252">
    <property type="term" value="P:peptidoglycan biosynthetic process"/>
    <property type="evidence" value="ECO:0007669"/>
    <property type="project" value="UniProtKB-UniRule"/>
</dbReference>
<dbReference type="GO" id="GO:0008360">
    <property type="term" value="P:regulation of cell shape"/>
    <property type="evidence" value="ECO:0007669"/>
    <property type="project" value="UniProtKB-KW"/>
</dbReference>
<dbReference type="CDD" id="cd03785">
    <property type="entry name" value="GT28_MurG"/>
    <property type="match status" value="1"/>
</dbReference>
<dbReference type="Gene3D" id="3.40.50.2000">
    <property type="entry name" value="Glycogen Phosphorylase B"/>
    <property type="match status" value="2"/>
</dbReference>
<dbReference type="HAMAP" id="MF_00033">
    <property type="entry name" value="MurG"/>
    <property type="match status" value="1"/>
</dbReference>
<dbReference type="InterPro" id="IPR006009">
    <property type="entry name" value="GlcNAc_MurG"/>
</dbReference>
<dbReference type="InterPro" id="IPR007235">
    <property type="entry name" value="Glyco_trans_28_C"/>
</dbReference>
<dbReference type="InterPro" id="IPR004276">
    <property type="entry name" value="GlycoTrans_28_N"/>
</dbReference>
<dbReference type="NCBIfam" id="TIGR01133">
    <property type="entry name" value="murG"/>
    <property type="match status" value="1"/>
</dbReference>
<dbReference type="PANTHER" id="PTHR21015:SF22">
    <property type="entry name" value="GLYCOSYLTRANSFERASE"/>
    <property type="match status" value="1"/>
</dbReference>
<dbReference type="PANTHER" id="PTHR21015">
    <property type="entry name" value="UDP-N-ACETYLGLUCOSAMINE--N-ACETYLMURAMYL-(PENTAPEPTIDE) PYROPHOSPHORYL-UNDECAPRENOL N-ACETYLGLUCOSAMINE TRANSFERASE 1"/>
    <property type="match status" value="1"/>
</dbReference>
<dbReference type="Pfam" id="PF04101">
    <property type="entry name" value="Glyco_tran_28_C"/>
    <property type="match status" value="1"/>
</dbReference>
<dbReference type="Pfam" id="PF03033">
    <property type="entry name" value="Glyco_transf_28"/>
    <property type="match status" value="1"/>
</dbReference>
<dbReference type="SUPFAM" id="SSF53756">
    <property type="entry name" value="UDP-Glycosyltransferase/glycogen phosphorylase"/>
    <property type="match status" value="1"/>
</dbReference>
<gene>
    <name evidence="1" type="primary">murG</name>
    <name type="ordered locus">AFE_0206</name>
</gene>
<evidence type="ECO:0000255" key="1">
    <source>
        <dbReference type="HAMAP-Rule" id="MF_00033"/>
    </source>
</evidence>